<reference key="1">
    <citation type="journal article" date="2008" name="PLoS ONE">
        <title>Comparative analysis of Acinetobacters: three genomes for three lifestyles.</title>
        <authorList>
            <person name="Vallenet D."/>
            <person name="Nordmann P."/>
            <person name="Barbe V."/>
            <person name="Poirel L."/>
            <person name="Mangenot S."/>
            <person name="Bataille E."/>
            <person name="Dossat C."/>
            <person name="Gas S."/>
            <person name="Kreimeyer A."/>
            <person name="Lenoble P."/>
            <person name="Oztas S."/>
            <person name="Poulain J."/>
            <person name="Segurens B."/>
            <person name="Robert C."/>
            <person name="Abergel C."/>
            <person name="Claverie J.-M."/>
            <person name="Raoult D."/>
            <person name="Medigue C."/>
            <person name="Weissenbach J."/>
            <person name="Cruveiller S."/>
        </authorList>
    </citation>
    <scope>NUCLEOTIDE SEQUENCE [LARGE SCALE GENOMIC DNA]</scope>
    <source>
        <strain>SDF</strain>
    </source>
</reference>
<gene>
    <name evidence="1" type="primary">rplN</name>
    <name type="ordered locus">ABSDF0433</name>
</gene>
<feature type="chain" id="PRO_1000144208" description="Large ribosomal subunit protein uL14">
    <location>
        <begin position="1"/>
        <end position="122"/>
    </location>
</feature>
<accession>B0VQS8</accession>
<organism>
    <name type="scientific">Acinetobacter baumannii (strain SDF)</name>
    <dbReference type="NCBI Taxonomy" id="509170"/>
    <lineage>
        <taxon>Bacteria</taxon>
        <taxon>Pseudomonadati</taxon>
        <taxon>Pseudomonadota</taxon>
        <taxon>Gammaproteobacteria</taxon>
        <taxon>Moraxellales</taxon>
        <taxon>Moraxellaceae</taxon>
        <taxon>Acinetobacter</taxon>
        <taxon>Acinetobacter calcoaceticus/baumannii complex</taxon>
    </lineage>
</organism>
<dbReference type="EMBL" id="CU468230">
    <property type="protein sequence ID" value="CAO99824.1"/>
    <property type="molecule type" value="Genomic_DNA"/>
</dbReference>
<dbReference type="SMR" id="B0VQS8"/>
<dbReference type="KEGG" id="abm:ABSDF0433"/>
<dbReference type="HOGENOM" id="CLU_095071_2_1_6"/>
<dbReference type="Proteomes" id="UP000001741">
    <property type="component" value="Chromosome"/>
</dbReference>
<dbReference type="GO" id="GO:0022625">
    <property type="term" value="C:cytosolic large ribosomal subunit"/>
    <property type="evidence" value="ECO:0007669"/>
    <property type="project" value="TreeGrafter"/>
</dbReference>
<dbReference type="GO" id="GO:0070180">
    <property type="term" value="F:large ribosomal subunit rRNA binding"/>
    <property type="evidence" value="ECO:0007669"/>
    <property type="project" value="TreeGrafter"/>
</dbReference>
<dbReference type="GO" id="GO:0003735">
    <property type="term" value="F:structural constituent of ribosome"/>
    <property type="evidence" value="ECO:0007669"/>
    <property type="project" value="InterPro"/>
</dbReference>
<dbReference type="GO" id="GO:0006412">
    <property type="term" value="P:translation"/>
    <property type="evidence" value="ECO:0007669"/>
    <property type="project" value="UniProtKB-UniRule"/>
</dbReference>
<dbReference type="CDD" id="cd00337">
    <property type="entry name" value="Ribosomal_uL14"/>
    <property type="match status" value="1"/>
</dbReference>
<dbReference type="FunFam" id="2.40.150.20:FF:000001">
    <property type="entry name" value="50S ribosomal protein L14"/>
    <property type="match status" value="1"/>
</dbReference>
<dbReference type="Gene3D" id="2.40.150.20">
    <property type="entry name" value="Ribosomal protein L14"/>
    <property type="match status" value="1"/>
</dbReference>
<dbReference type="HAMAP" id="MF_01367">
    <property type="entry name" value="Ribosomal_uL14"/>
    <property type="match status" value="1"/>
</dbReference>
<dbReference type="InterPro" id="IPR000218">
    <property type="entry name" value="Ribosomal_uL14"/>
</dbReference>
<dbReference type="InterPro" id="IPR005745">
    <property type="entry name" value="Ribosomal_uL14_bac-type"/>
</dbReference>
<dbReference type="InterPro" id="IPR019972">
    <property type="entry name" value="Ribosomal_uL14_CS"/>
</dbReference>
<dbReference type="InterPro" id="IPR036853">
    <property type="entry name" value="Ribosomal_uL14_sf"/>
</dbReference>
<dbReference type="NCBIfam" id="TIGR01067">
    <property type="entry name" value="rplN_bact"/>
    <property type="match status" value="1"/>
</dbReference>
<dbReference type="PANTHER" id="PTHR11761">
    <property type="entry name" value="50S/60S RIBOSOMAL PROTEIN L14/L23"/>
    <property type="match status" value="1"/>
</dbReference>
<dbReference type="PANTHER" id="PTHR11761:SF3">
    <property type="entry name" value="LARGE RIBOSOMAL SUBUNIT PROTEIN UL14M"/>
    <property type="match status" value="1"/>
</dbReference>
<dbReference type="Pfam" id="PF00238">
    <property type="entry name" value="Ribosomal_L14"/>
    <property type="match status" value="1"/>
</dbReference>
<dbReference type="SMART" id="SM01374">
    <property type="entry name" value="Ribosomal_L14"/>
    <property type="match status" value="1"/>
</dbReference>
<dbReference type="SUPFAM" id="SSF50193">
    <property type="entry name" value="Ribosomal protein L14"/>
    <property type="match status" value="1"/>
</dbReference>
<dbReference type="PROSITE" id="PS00049">
    <property type="entry name" value="RIBOSOMAL_L14"/>
    <property type="match status" value="1"/>
</dbReference>
<sequence length="122" mass="13514">MIQTETMLDVADNSGARRVQCIKVLGGSHRRYASVGDIIKVTVKEAIPRARVKKGDVMNAVVVRTKFGIRRPDGSVIRFDDNAAVILNNNKAPIATRIFGPVTRELRIEQFMKIISLAPEVL</sequence>
<evidence type="ECO:0000255" key="1">
    <source>
        <dbReference type="HAMAP-Rule" id="MF_01367"/>
    </source>
</evidence>
<evidence type="ECO:0000305" key="2"/>
<proteinExistence type="inferred from homology"/>
<comment type="function">
    <text evidence="1">Binds to 23S rRNA. Forms part of two intersubunit bridges in the 70S ribosome.</text>
</comment>
<comment type="subunit">
    <text evidence="1">Part of the 50S ribosomal subunit. Forms a cluster with proteins L3 and L19. In the 70S ribosome, L14 and L19 interact and together make contacts with the 16S rRNA in bridges B5 and B8.</text>
</comment>
<comment type="similarity">
    <text evidence="1">Belongs to the universal ribosomal protein uL14 family.</text>
</comment>
<keyword id="KW-0687">Ribonucleoprotein</keyword>
<keyword id="KW-0689">Ribosomal protein</keyword>
<keyword id="KW-0694">RNA-binding</keyword>
<keyword id="KW-0699">rRNA-binding</keyword>
<protein>
    <recommendedName>
        <fullName evidence="1">Large ribosomal subunit protein uL14</fullName>
    </recommendedName>
    <alternativeName>
        <fullName evidence="2">50S ribosomal protein L14</fullName>
    </alternativeName>
</protein>
<name>RL14_ACIBS</name>